<reference key="1">
    <citation type="journal article" date="2005" name="PLoS Biol.">
        <title>The genomes of Oryza sativa: a history of duplications.</title>
        <authorList>
            <person name="Yu J."/>
            <person name="Wang J."/>
            <person name="Lin W."/>
            <person name="Li S."/>
            <person name="Li H."/>
            <person name="Zhou J."/>
            <person name="Ni P."/>
            <person name="Dong W."/>
            <person name="Hu S."/>
            <person name="Zeng C."/>
            <person name="Zhang J."/>
            <person name="Zhang Y."/>
            <person name="Li R."/>
            <person name="Xu Z."/>
            <person name="Li S."/>
            <person name="Li X."/>
            <person name="Zheng H."/>
            <person name="Cong L."/>
            <person name="Lin L."/>
            <person name="Yin J."/>
            <person name="Geng J."/>
            <person name="Li G."/>
            <person name="Shi J."/>
            <person name="Liu J."/>
            <person name="Lv H."/>
            <person name="Li J."/>
            <person name="Wang J."/>
            <person name="Deng Y."/>
            <person name="Ran L."/>
            <person name="Shi X."/>
            <person name="Wang X."/>
            <person name="Wu Q."/>
            <person name="Li C."/>
            <person name="Ren X."/>
            <person name="Wang J."/>
            <person name="Wang X."/>
            <person name="Li D."/>
            <person name="Liu D."/>
            <person name="Zhang X."/>
            <person name="Ji Z."/>
            <person name="Zhao W."/>
            <person name="Sun Y."/>
            <person name="Zhang Z."/>
            <person name="Bao J."/>
            <person name="Han Y."/>
            <person name="Dong L."/>
            <person name="Ji J."/>
            <person name="Chen P."/>
            <person name="Wu S."/>
            <person name="Liu J."/>
            <person name="Xiao Y."/>
            <person name="Bu D."/>
            <person name="Tan J."/>
            <person name="Yang L."/>
            <person name="Ye C."/>
            <person name="Zhang J."/>
            <person name="Xu J."/>
            <person name="Zhou Y."/>
            <person name="Yu Y."/>
            <person name="Zhang B."/>
            <person name="Zhuang S."/>
            <person name="Wei H."/>
            <person name="Liu B."/>
            <person name="Lei M."/>
            <person name="Yu H."/>
            <person name="Li Y."/>
            <person name="Xu H."/>
            <person name="Wei S."/>
            <person name="He X."/>
            <person name="Fang L."/>
            <person name="Zhang Z."/>
            <person name="Zhang Y."/>
            <person name="Huang X."/>
            <person name="Su Z."/>
            <person name="Tong W."/>
            <person name="Li J."/>
            <person name="Tong Z."/>
            <person name="Li S."/>
            <person name="Ye J."/>
            <person name="Wang L."/>
            <person name="Fang L."/>
            <person name="Lei T."/>
            <person name="Chen C.-S."/>
            <person name="Chen H.-C."/>
            <person name="Xu Z."/>
            <person name="Li H."/>
            <person name="Huang H."/>
            <person name="Zhang F."/>
            <person name="Xu H."/>
            <person name="Li N."/>
            <person name="Zhao C."/>
            <person name="Li S."/>
            <person name="Dong L."/>
            <person name="Huang Y."/>
            <person name="Li L."/>
            <person name="Xi Y."/>
            <person name="Qi Q."/>
            <person name="Li W."/>
            <person name="Zhang B."/>
            <person name="Hu W."/>
            <person name="Zhang Y."/>
            <person name="Tian X."/>
            <person name="Jiao Y."/>
            <person name="Liang X."/>
            <person name="Jin J."/>
            <person name="Gao L."/>
            <person name="Zheng W."/>
            <person name="Hao B."/>
            <person name="Liu S.-M."/>
            <person name="Wang W."/>
            <person name="Yuan L."/>
            <person name="Cao M."/>
            <person name="McDermott J."/>
            <person name="Samudrala R."/>
            <person name="Wang J."/>
            <person name="Wong G.K.-S."/>
            <person name="Yang H."/>
        </authorList>
    </citation>
    <scope>NUCLEOTIDE SEQUENCE [LARGE SCALE GENOMIC DNA]</scope>
    <source>
        <strain>cv. 93-11</strain>
    </source>
</reference>
<reference key="2">
    <citation type="journal article" date="2014" name="Plant Physiol.">
        <title>Functional and evolutionary analysis of the CASPARIAN STRIP MEMBRANE DOMAIN PROTEIN family.</title>
        <authorList>
            <person name="Roppolo D."/>
            <person name="Boeckmann B."/>
            <person name="Pfister A."/>
            <person name="Boutet E."/>
            <person name="Rubio M.C."/>
            <person name="Denervaud-Tendon V."/>
            <person name="Vermeer J.E."/>
            <person name="Gheyselinck J."/>
            <person name="Xenarios I."/>
            <person name="Geldner N."/>
        </authorList>
    </citation>
    <scope>GENE FAMILY</scope>
    <scope>NOMENCLATURE</scope>
</reference>
<protein>
    <recommendedName>
        <fullName>Casparian strip membrane protein 5</fullName>
        <shortName>OsCASP5</shortName>
    </recommendedName>
</protein>
<keyword id="KW-1003">Cell membrane</keyword>
<keyword id="KW-0961">Cell wall biogenesis/degradation</keyword>
<keyword id="KW-0472">Membrane</keyword>
<keyword id="KW-1185">Reference proteome</keyword>
<keyword id="KW-0812">Transmembrane</keyword>
<keyword id="KW-1133">Transmembrane helix</keyword>
<proteinExistence type="inferred from homology"/>
<organism>
    <name type="scientific">Oryza sativa subsp. indica</name>
    <name type="common">Rice</name>
    <dbReference type="NCBI Taxonomy" id="39946"/>
    <lineage>
        <taxon>Eukaryota</taxon>
        <taxon>Viridiplantae</taxon>
        <taxon>Streptophyta</taxon>
        <taxon>Embryophyta</taxon>
        <taxon>Tracheophyta</taxon>
        <taxon>Spermatophyta</taxon>
        <taxon>Magnoliopsida</taxon>
        <taxon>Liliopsida</taxon>
        <taxon>Poales</taxon>
        <taxon>Poaceae</taxon>
        <taxon>BOP clade</taxon>
        <taxon>Oryzoideae</taxon>
        <taxon>Oryzeae</taxon>
        <taxon>Oryzinae</taxon>
        <taxon>Oryza</taxon>
        <taxon>Oryza sativa</taxon>
    </lineage>
</organism>
<sequence length="201" mass="21030">MEAGEEIEDGEPSTPTYKAHHPPPHLPPPMRSSGVSLVLSVADLVLRFVAIGGTAGSAIAMATTSETLPFAAPFVRFRAEYSDLPTLMFFVVASSVVCAYLVLSLPASVVHVVRPGARSSRAILAFLDTVMLALLTASASAAAAIVYLAHRGSARANWLGICQQFTSFCQRITASLVGSFAAAVVLVALVFLSALSLARRA</sequence>
<comment type="function">
    <text evidence="1">Regulates membrane-cell wall junctions and localized cell wall deposition. Required for establishment of the Casparian strip membrane domain (CSD) and the subsequent formation of Casparian strips, a cell wall modification of the root endodermis that determines an apoplastic barrier between the intraorganismal apoplasm and the extraorganismal apoplasm and prevents lateral diffusion (By similarity).</text>
</comment>
<comment type="subunit">
    <text evidence="1">Homodimer and heterodimers.</text>
</comment>
<comment type="subcellular location">
    <subcellularLocation>
        <location evidence="1">Cell membrane</location>
        <topology evidence="1">Multi-pass membrane protein</topology>
    </subcellularLocation>
    <text evidence="1">Very restricted localization following a belt shape within the plasma membrane which coincides with the position of the Casparian strip membrane domain in the root endodermis.</text>
</comment>
<comment type="similarity">
    <text evidence="4">Belongs to the Casparian strip membrane proteins (CASP) family.</text>
</comment>
<comment type="sequence caution" evidence="4">
    <conflict type="erroneous gene model prediction">
        <sequence resource="EMBL-CDS" id="EEC73471"/>
    </conflict>
</comment>
<feature type="chain" id="PRO_0000412018" description="Casparian strip membrane protein 5">
    <location>
        <begin position="1"/>
        <end position="201"/>
    </location>
</feature>
<feature type="topological domain" description="Cytoplasmic" evidence="2">
    <location>
        <begin position="1"/>
        <end position="34"/>
    </location>
</feature>
<feature type="transmembrane region" description="Helical" evidence="2">
    <location>
        <begin position="35"/>
        <end position="55"/>
    </location>
</feature>
<feature type="topological domain" description="Extracellular" evidence="2">
    <location>
        <begin position="56"/>
        <end position="86"/>
    </location>
</feature>
<feature type="transmembrane region" description="Helical" evidence="2">
    <location>
        <begin position="87"/>
        <end position="107"/>
    </location>
</feature>
<feature type="topological domain" description="Cytoplasmic" evidence="2">
    <location>
        <begin position="108"/>
        <end position="128"/>
    </location>
</feature>
<feature type="transmembrane region" description="Helical" evidence="2">
    <location>
        <begin position="129"/>
        <end position="149"/>
    </location>
</feature>
<feature type="topological domain" description="Extracellular" evidence="2">
    <location>
        <begin position="150"/>
        <end position="171"/>
    </location>
</feature>
<feature type="transmembrane region" description="Helical" evidence="2">
    <location>
        <begin position="172"/>
        <end position="192"/>
    </location>
</feature>
<feature type="topological domain" description="Cytoplasmic" evidence="2">
    <location>
        <begin position="193"/>
        <end position="201"/>
    </location>
</feature>
<feature type="region of interest" description="Disordered" evidence="3">
    <location>
        <begin position="1"/>
        <end position="26"/>
    </location>
</feature>
<feature type="compositionally biased region" description="Acidic residues" evidence="3">
    <location>
        <begin position="1"/>
        <end position="11"/>
    </location>
</feature>
<accession>B8AEC9</accession>
<evidence type="ECO:0000250" key="1"/>
<evidence type="ECO:0000255" key="2"/>
<evidence type="ECO:0000256" key="3">
    <source>
        <dbReference type="SAM" id="MobiDB-lite"/>
    </source>
</evidence>
<evidence type="ECO:0000305" key="4"/>
<dbReference type="EMBL" id="CM000127">
    <property type="protein sequence ID" value="EEC73471.1"/>
    <property type="status" value="ALT_SEQ"/>
    <property type="molecule type" value="Genomic_DNA"/>
</dbReference>
<dbReference type="STRING" id="39946.B8AEC9"/>
<dbReference type="EnsemblPlants" id="OsGoSa_02g0022470.01">
    <property type="protein sequence ID" value="OsGoSa_02g0022470.01"/>
    <property type="gene ID" value="OsGoSa_02g0022470"/>
</dbReference>
<dbReference type="EnsemblPlants" id="OsIR64_02g0021830.01">
    <property type="protein sequence ID" value="OsIR64_02g0021830.01"/>
    <property type="gene ID" value="OsIR64_02g0021830"/>
</dbReference>
<dbReference type="EnsemblPlants" id="OsKYG_02g0022010.01">
    <property type="protein sequence ID" value="OsKYG_02g0022010.01"/>
    <property type="gene ID" value="OsKYG_02g0022010"/>
</dbReference>
<dbReference type="EnsemblPlants" id="OsLaMu_02g0021970.01">
    <property type="protein sequence ID" value="OsLaMu_02g0021970.01"/>
    <property type="gene ID" value="OsLaMu_02g0021970"/>
</dbReference>
<dbReference type="EnsemblPlants" id="OsLima_02g0022280.01">
    <property type="protein sequence ID" value="OsLima_02g0022280.01"/>
    <property type="gene ID" value="OsLima_02g0022280"/>
</dbReference>
<dbReference type="EnsemblPlants" id="OsLiXu_02g0022150.01">
    <property type="protein sequence ID" value="OsLiXu_02g0022150.01"/>
    <property type="gene ID" value="OsLiXu_02g0022150"/>
</dbReference>
<dbReference type="EnsemblPlants" id="OsMH63_02G022520_01">
    <property type="protein sequence ID" value="OsMH63_02G022520_01"/>
    <property type="gene ID" value="OsMH63_02G022520"/>
</dbReference>
<dbReference type="EnsemblPlants" id="OsPr106_02g0022080.01">
    <property type="protein sequence ID" value="OsPr106_02g0022080.01"/>
    <property type="gene ID" value="OsPr106_02g0022080"/>
</dbReference>
<dbReference type="EnsemblPlants" id="OsZS97_02G021850_01">
    <property type="protein sequence ID" value="OsZS97_02G021850_01"/>
    <property type="gene ID" value="OsZS97_02G021850"/>
</dbReference>
<dbReference type="Gramene" id="OsGoSa_02g0022470.01">
    <property type="protein sequence ID" value="OsGoSa_02g0022470.01"/>
    <property type="gene ID" value="OsGoSa_02g0022470"/>
</dbReference>
<dbReference type="Gramene" id="OsIR64_02g0021830.01">
    <property type="protein sequence ID" value="OsIR64_02g0021830.01"/>
    <property type="gene ID" value="OsIR64_02g0021830"/>
</dbReference>
<dbReference type="Gramene" id="OsKYG_02g0022010.01">
    <property type="protein sequence ID" value="OsKYG_02g0022010.01"/>
    <property type="gene ID" value="OsKYG_02g0022010"/>
</dbReference>
<dbReference type="Gramene" id="OsLaMu_02g0021970.01">
    <property type="protein sequence ID" value="OsLaMu_02g0021970.01"/>
    <property type="gene ID" value="OsLaMu_02g0021970"/>
</dbReference>
<dbReference type="Gramene" id="OsLima_02g0022280.01">
    <property type="protein sequence ID" value="OsLima_02g0022280.01"/>
    <property type="gene ID" value="OsLima_02g0022280"/>
</dbReference>
<dbReference type="Gramene" id="OsLiXu_02g0022150.01">
    <property type="protein sequence ID" value="OsLiXu_02g0022150.01"/>
    <property type="gene ID" value="OsLiXu_02g0022150"/>
</dbReference>
<dbReference type="Gramene" id="OsMH63_02G022520_01">
    <property type="protein sequence ID" value="OsMH63_02G022520_01"/>
    <property type="gene ID" value="OsMH63_02G022520"/>
</dbReference>
<dbReference type="Gramene" id="OsPr106_02g0022080.01">
    <property type="protein sequence ID" value="OsPr106_02g0022080.01"/>
    <property type="gene ID" value="OsPr106_02g0022080"/>
</dbReference>
<dbReference type="Gramene" id="OsZS97_02G021850_01">
    <property type="protein sequence ID" value="OsZS97_02G021850_01"/>
    <property type="gene ID" value="OsZS97_02G021850"/>
</dbReference>
<dbReference type="HOGENOM" id="CLU_777041_0_0_1"/>
<dbReference type="OrthoDB" id="753675at2759"/>
<dbReference type="Proteomes" id="UP000007015">
    <property type="component" value="Chromosome 2"/>
</dbReference>
<dbReference type="GO" id="GO:0005886">
    <property type="term" value="C:plasma membrane"/>
    <property type="evidence" value="ECO:0007669"/>
    <property type="project" value="UniProtKB-SubCell"/>
</dbReference>
<dbReference type="GO" id="GO:0071555">
    <property type="term" value="P:cell wall organization"/>
    <property type="evidence" value="ECO:0007669"/>
    <property type="project" value="UniProtKB-KW"/>
</dbReference>
<dbReference type="InterPro" id="IPR006459">
    <property type="entry name" value="CASP/CASPL"/>
</dbReference>
<dbReference type="InterPro" id="IPR006702">
    <property type="entry name" value="CASP_dom"/>
</dbReference>
<dbReference type="InterPro" id="IPR044173">
    <property type="entry name" value="CASPL"/>
</dbReference>
<dbReference type="NCBIfam" id="TIGR01569">
    <property type="entry name" value="A_tha_TIGR01569"/>
    <property type="match status" value="1"/>
</dbReference>
<dbReference type="PANTHER" id="PTHR36488:SF12">
    <property type="entry name" value="CASP-LIKE PROTEIN"/>
    <property type="match status" value="1"/>
</dbReference>
<dbReference type="PANTHER" id="PTHR36488">
    <property type="entry name" value="CASP-LIKE PROTEIN 1U1"/>
    <property type="match status" value="1"/>
</dbReference>
<dbReference type="Pfam" id="PF04535">
    <property type="entry name" value="CASP_dom"/>
    <property type="match status" value="1"/>
</dbReference>
<name>CASP5_ORYSI</name>
<gene>
    <name type="ORF">OsI_07795</name>
</gene>